<feature type="signal peptide" evidence="1">
    <location>
        <begin position="1"/>
        <end position="26"/>
    </location>
</feature>
<feature type="chain" id="PRO_0000417553" description="Putative butyrophilin-like protein 10 pseudogene">
    <location>
        <begin position="27"/>
        <end position="291"/>
    </location>
</feature>
<feature type="topological domain" description="Extracellular" evidence="1">
    <location>
        <begin position="27"/>
        <end position="254"/>
    </location>
</feature>
<feature type="transmembrane region" description="Helical" evidence="1">
    <location>
        <begin position="255"/>
        <end position="275"/>
    </location>
</feature>
<feature type="topological domain" description="Cytoplasmic" evidence="1">
    <location>
        <begin position="276"/>
        <end position="291"/>
    </location>
</feature>
<feature type="domain" description="Ig-like V-type">
    <location>
        <begin position="27"/>
        <end position="146"/>
    </location>
</feature>
<feature type="glycosylation site" description="N-linked (GlcNAc...) asparagine" evidence="1">
    <location>
        <position position="59"/>
    </location>
</feature>
<feature type="disulfide bond" evidence="2">
    <location>
        <begin position="54"/>
        <end position="128"/>
    </location>
</feature>
<sequence>MAVTCDPEAFLSICFVTLVFLQLPLASIWKADFDVTGPHAPILAMAGGHVELQCQLFPNISAEDMELRWYRCQPSLAVHMHERGMDMDGEQKWQYRGRTTFMSDHVARGKAMVRSHRVTTFDNRTYCCRFKDGVKFGEATVQVQVAGLGREPRIQVTDQQDGVRAECTSAGCFPKSWVERRDFRGQARPAVTNLSASATTRLWAVASSLTLWDRAVEGLSCSISSPLLPERRKVAESHLPATFSRSSQFTAWKAALPLILVAMGLVIAGGICIFWKRQREKNKASLEEERE</sequence>
<name>BTNLA_HUMAN</name>
<reference key="1">
    <citation type="journal article" date="2006" name="Nature">
        <title>The DNA sequence and biological annotation of human chromosome 1.</title>
        <authorList>
            <person name="Gregory S.G."/>
            <person name="Barlow K.F."/>
            <person name="McLay K.E."/>
            <person name="Kaul R."/>
            <person name="Swarbreck D."/>
            <person name="Dunham A."/>
            <person name="Scott C.E."/>
            <person name="Howe K.L."/>
            <person name="Woodfine K."/>
            <person name="Spencer C.C.A."/>
            <person name="Jones M.C."/>
            <person name="Gillson C."/>
            <person name="Searle S."/>
            <person name="Zhou Y."/>
            <person name="Kokocinski F."/>
            <person name="McDonald L."/>
            <person name="Evans R."/>
            <person name="Phillips K."/>
            <person name="Atkinson A."/>
            <person name="Cooper R."/>
            <person name="Jones C."/>
            <person name="Hall R.E."/>
            <person name="Andrews T.D."/>
            <person name="Lloyd C."/>
            <person name="Ainscough R."/>
            <person name="Almeida J.P."/>
            <person name="Ambrose K.D."/>
            <person name="Anderson F."/>
            <person name="Andrew R.W."/>
            <person name="Ashwell R.I.S."/>
            <person name="Aubin K."/>
            <person name="Babbage A.K."/>
            <person name="Bagguley C.L."/>
            <person name="Bailey J."/>
            <person name="Beasley H."/>
            <person name="Bethel G."/>
            <person name="Bird C.P."/>
            <person name="Bray-Allen S."/>
            <person name="Brown J.Y."/>
            <person name="Brown A.J."/>
            <person name="Buckley D."/>
            <person name="Burton J."/>
            <person name="Bye J."/>
            <person name="Carder C."/>
            <person name="Chapman J.C."/>
            <person name="Clark S.Y."/>
            <person name="Clarke G."/>
            <person name="Clee C."/>
            <person name="Cobley V."/>
            <person name="Collier R.E."/>
            <person name="Corby N."/>
            <person name="Coville G.J."/>
            <person name="Davies J."/>
            <person name="Deadman R."/>
            <person name="Dunn M."/>
            <person name="Earthrowl M."/>
            <person name="Ellington A.G."/>
            <person name="Errington H."/>
            <person name="Frankish A."/>
            <person name="Frankland J."/>
            <person name="French L."/>
            <person name="Garner P."/>
            <person name="Garnett J."/>
            <person name="Gay L."/>
            <person name="Ghori M.R.J."/>
            <person name="Gibson R."/>
            <person name="Gilby L.M."/>
            <person name="Gillett W."/>
            <person name="Glithero R.J."/>
            <person name="Grafham D.V."/>
            <person name="Griffiths C."/>
            <person name="Griffiths-Jones S."/>
            <person name="Grocock R."/>
            <person name="Hammond S."/>
            <person name="Harrison E.S.I."/>
            <person name="Hart E."/>
            <person name="Haugen E."/>
            <person name="Heath P.D."/>
            <person name="Holmes S."/>
            <person name="Holt K."/>
            <person name="Howden P.J."/>
            <person name="Hunt A.R."/>
            <person name="Hunt S.E."/>
            <person name="Hunter G."/>
            <person name="Isherwood J."/>
            <person name="James R."/>
            <person name="Johnson C."/>
            <person name="Johnson D."/>
            <person name="Joy A."/>
            <person name="Kay M."/>
            <person name="Kershaw J.K."/>
            <person name="Kibukawa M."/>
            <person name="Kimberley A.M."/>
            <person name="King A."/>
            <person name="Knights A.J."/>
            <person name="Lad H."/>
            <person name="Laird G."/>
            <person name="Lawlor S."/>
            <person name="Leongamornlert D.A."/>
            <person name="Lloyd D.M."/>
            <person name="Loveland J."/>
            <person name="Lovell J."/>
            <person name="Lush M.J."/>
            <person name="Lyne R."/>
            <person name="Martin S."/>
            <person name="Mashreghi-Mohammadi M."/>
            <person name="Matthews L."/>
            <person name="Matthews N.S.W."/>
            <person name="McLaren S."/>
            <person name="Milne S."/>
            <person name="Mistry S."/>
            <person name="Moore M.J.F."/>
            <person name="Nickerson T."/>
            <person name="O'Dell C.N."/>
            <person name="Oliver K."/>
            <person name="Palmeiri A."/>
            <person name="Palmer S.A."/>
            <person name="Parker A."/>
            <person name="Patel D."/>
            <person name="Pearce A.V."/>
            <person name="Peck A.I."/>
            <person name="Pelan S."/>
            <person name="Phelps K."/>
            <person name="Phillimore B.J."/>
            <person name="Plumb R."/>
            <person name="Rajan J."/>
            <person name="Raymond C."/>
            <person name="Rouse G."/>
            <person name="Saenphimmachak C."/>
            <person name="Sehra H.K."/>
            <person name="Sheridan E."/>
            <person name="Shownkeen R."/>
            <person name="Sims S."/>
            <person name="Skuce C.D."/>
            <person name="Smith M."/>
            <person name="Steward C."/>
            <person name="Subramanian S."/>
            <person name="Sycamore N."/>
            <person name="Tracey A."/>
            <person name="Tromans A."/>
            <person name="Van Helmond Z."/>
            <person name="Wall M."/>
            <person name="Wallis J.M."/>
            <person name="White S."/>
            <person name="Whitehead S.L."/>
            <person name="Wilkinson J.E."/>
            <person name="Willey D.L."/>
            <person name="Williams H."/>
            <person name="Wilming L."/>
            <person name="Wray P.W."/>
            <person name="Wu Z."/>
            <person name="Coulson A."/>
            <person name="Vaudin M."/>
            <person name="Sulston J.E."/>
            <person name="Durbin R.M."/>
            <person name="Hubbard T."/>
            <person name="Wooster R."/>
            <person name="Dunham I."/>
            <person name="Carter N.P."/>
            <person name="McVean G."/>
            <person name="Ross M.T."/>
            <person name="Harrow J."/>
            <person name="Olson M.V."/>
            <person name="Beck S."/>
            <person name="Rogers J."/>
            <person name="Bentley D.R."/>
        </authorList>
    </citation>
    <scope>NUCLEOTIDE SEQUENCE [LARGE SCALE GENOMIC DNA]</scope>
</reference>
<keyword id="KW-1015">Disulfide bond</keyword>
<keyword id="KW-0325">Glycoprotein</keyword>
<keyword id="KW-0393">Immunoglobulin domain</keyword>
<keyword id="KW-0472">Membrane</keyword>
<keyword id="KW-1185">Reference proteome</keyword>
<keyword id="KW-0732">Signal</keyword>
<keyword id="KW-0812">Transmembrane</keyword>
<keyword id="KW-1133">Transmembrane helix</keyword>
<dbReference type="EMBL" id="AL139288">
    <property type="status" value="NOT_ANNOTATED_CDS"/>
    <property type="molecule type" value="Genomic_DNA"/>
</dbReference>
<dbReference type="SMR" id="A8MVZ5"/>
<dbReference type="FunCoup" id="A8MVZ5">
    <property type="interactions" value="248"/>
</dbReference>
<dbReference type="GlyCosmos" id="A8MVZ5">
    <property type="glycosylation" value="1 site, No reported glycans"/>
</dbReference>
<dbReference type="GlyGen" id="A8MVZ5">
    <property type="glycosylation" value="1 site"/>
</dbReference>
<dbReference type="PhosphoSitePlus" id="A8MVZ5"/>
<dbReference type="BioMuta" id="HGNC:42540"/>
<dbReference type="AGR" id="HGNC:42540"/>
<dbReference type="GeneCards" id="BTNL10P"/>
<dbReference type="HGNC" id="HGNC:42540">
    <property type="gene designation" value="BTNL10P"/>
</dbReference>
<dbReference type="neXtProt" id="NX_A8MVZ5"/>
<dbReference type="InParanoid" id="A8MVZ5"/>
<dbReference type="PAN-GO" id="A8MVZ5">
    <property type="GO annotations" value="4 GO annotations based on evolutionary models"/>
</dbReference>
<dbReference type="Pharos" id="A8MVZ5">
    <property type="development level" value="Tdark"/>
</dbReference>
<dbReference type="Proteomes" id="UP000005640">
    <property type="component" value="Unplaced"/>
</dbReference>
<dbReference type="RNAct" id="A8MVZ5">
    <property type="molecule type" value="protein"/>
</dbReference>
<dbReference type="GO" id="GO:0009897">
    <property type="term" value="C:external side of plasma membrane"/>
    <property type="evidence" value="ECO:0000318"/>
    <property type="project" value="GO_Central"/>
</dbReference>
<dbReference type="GO" id="GO:0005102">
    <property type="term" value="F:signaling receptor binding"/>
    <property type="evidence" value="ECO:0000318"/>
    <property type="project" value="GO_Central"/>
</dbReference>
<dbReference type="GO" id="GO:0001817">
    <property type="term" value="P:regulation of cytokine production"/>
    <property type="evidence" value="ECO:0000318"/>
    <property type="project" value="GO_Central"/>
</dbReference>
<dbReference type="GO" id="GO:0050852">
    <property type="term" value="P:T cell receptor signaling pathway"/>
    <property type="evidence" value="ECO:0000318"/>
    <property type="project" value="GO_Central"/>
</dbReference>
<dbReference type="FunFam" id="2.60.40.10:FF:000088">
    <property type="entry name" value="Butyrophilin subfamily 1 member A1"/>
    <property type="match status" value="1"/>
</dbReference>
<dbReference type="FunFam" id="2.60.40.10:FF:000208">
    <property type="entry name" value="Butyrophilin subfamily 1 member A1"/>
    <property type="match status" value="1"/>
</dbReference>
<dbReference type="Gene3D" id="2.60.40.10">
    <property type="entry name" value="Immunoglobulins"/>
    <property type="match status" value="2"/>
</dbReference>
<dbReference type="InterPro" id="IPR053896">
    <property type="entry name" value="BTN3A2-like_Ig-C"/>
</dbReference>
<dbReference type="InterPro" id="IPR007110">
    <property type="entry name" value="Ig-like_dom"/>
</dbReference>
<dbReference type="InterPro" id="IPR036179">
    <property type="entry name" value="Ig-like_dom_sf"/>
</dbReference>
<dbReference type="InterPro" id="IPR013783">
    <property type="entry name" value="Ig-like_fold"/>
</dbReference>
<dbReference type="InterPro" id="IPR013106">
    <property type="entry name" value="Ig_V-set"/>
</dbReference>
<dbReference type="InterPro" id="IPR050504">
    <property type="entry name" value="IgSF_BTN/MOG"/>
</dbReference>
<dbReference type="PANTHER" id="PTHR24100">
    <property type="entry name" value="BUTYROPHILIN"/>
    <property type="match status" value="1"/>
</dbReference>
<dbReference type="PANTHER" id="PTHR24100:SF133">
    <property type="entry name" value="BUTYROPHILIN-LIKE PROTEIN 10 PSEUDOGENE-RELATED"/>
    <property type="match status" value="1"/>
</dbReference>
<dbReference type="Pfam" id="PF22705">
    <property type="entry name" value="C2-set_3"/>
    <property type="match status" value="1"/>
</dbReference>
<dbReference type="Pfam" id="PF07686">
    <property type="entry name" value="V-set"/>
    <property type="match status" value="1"/>
</dbReference>
<dbReference type="SUPFAM" id="SSF48726">
    <property type="entry name" value="Immunoglobulin"/>
    <property type="match status" value="1"/>
</dbReference>
<dbReference type="PROSITE" id="PS50835">
    <property type="entry name" value="IG_LIKE"/>
    <property type="match status" value="1"/>
</dbReference>
<accession>A8MVZ5</accession>
<comment type="subcellular location">
    <subcellularLocation>
        <location evidence="3">Membrane</location>
        <topology evidence="3">Single-pass type I membrane protein</topology>
    </subcellularLocation>
</comment>
<comment type="similarity">
    <text evidence="3">Belongs to the immunoglobulin superfamily. BTN/MOG family.</text>
</comment>
<comment type="caution">
    <text evidence="3">Product of a dubious gene prediction.</text>
</comment>
<organism>
    <name type="scientific">Homo sapiens</name>
    <name type="common">Human</name>
    <dbReference type="NCBI Taxonomy" id="9606"/>
    <lineage>
        <taxon>Eukaryota</taxon>
        <taxon>Metazoa</taxon>
        <taxon>Chordata</taxon>
        <taxon>Craniata</taxon>
        <taxon>Vertebrata</taxon>
        <taxon>Euteleostomi</taxon>
        <taxon>Mammalia</taxon>
        <taxon>Eutheria</taxon>
        <taxon>Euarchontoglires</taxon>
        <taxon>Primates</taxon>
        <taxon>Haplorrhini</taxon>
        <taxon>Catarrhini</taxon>
        <taxon>Hominidae</taxon>
        <taxon>Homo</taxon>
    </lineage>
</organism>
<gene>
    <name evidence="4" type="primary">BTNL10P</name>
    <name type="synonym">BTNL10</name>
</gene>
<evidence type="ECO:0000255" key="1"/>
<evidence type="ECO:0000255" key="2">
    <source>
        <dbReference type="PROSITE-ProRule" id="PRU00114"/>
    </source>
</evidence>
<evidence type="ECO:0000305" key="3"/>
<evidence type="ECO:0000312" key="4">
    <source>
        <dbReference type="HGNC" id="HGNC:42540"/>
    </source>
</evidence>
<proteinExistence type="uncertain"/>
<protein>
    <recommendedName>
        <fullName evidence="4">Putative butyrophilin-like protein 10 pseudogene</fullName>
    </recommendedName>
</protein>